<name>HTPX_XANCB</name>
<reference key="1">
    <citation type="journal article" date="2008" name="J. Biotechnol.">
        <title>The genome of Xanthomonas campestris pv. campestris B100 and its use for the reconstruction of metabolic pathways involved in xanthan biosynthesis.</title>
        <authorList>
            <person name="Vorhoelter F.-J."/>
            <person name="Schneiker S."/>
            <person name="Goesmann A."/>
            <person name="Krause L."/>
            <person name="Bekel T."/>
            <person name="Kaiser O."/>
            <person name="Linke B."/>
            <person name="Patschkowski T."/>
            <person name="Rueckert C."/>
            <person name="Schmid J."/>
            <person name="Sidhu V.K."/>
            <person name="Sieber V."/>
            <person name="Tauch A."/>
            <person name="Watt S.A."/>
            <person name="Weisshaar B."/>
            <person name="Becker A."/>
            <person name="Niehaus K."/>
            <person name="Puehler A."/>
        </authorList>
    </citation>
    <scope>NUCLEOTIDE SEQUENCE [LARGE SCALE GENOMIC DNA]</scope>
    <source>
        <strain>B100</strain>
    </source>
</reference>
<protein>
    <recommendedName>
        <fullName evidence="1">Protease HtpX</fullName>
        <ecNumber evidence="1">3.4.24.-</ecNumber>
    </recommendedName>
    <alternativeName>
        <fullName evidence="1">Heat shock protein HtpX</fullName>
    </alternativeName>
</protein>
<organism>
    <name type="scientific">Xanthomonas campestris pv. campestris (strain B100)</name>
    <dbReference type="NCBI Taxonomy" id="509169"/>
    <lineage>
        <taxon>Bacteria</taxon>
        <taxon>Pseudomonadati</taxon>
        <taxon>Pseudomonadota</taxon>
        <taxon>Gammaproteobacteria</taxon>
        <taxon>Lysobacterales</taxon>
        <taxon>Lysobacteraceae</taxon>
        <taxon>Xanthomonas</taxon>
    </lineage>
</organism>
<comment type="cofactor">
    <cofactor evidence="1">
        <name>Zn(2+)</name>
        <dbReference type="ChEBI" id="CHEBI:29105"/>
    </cofactor>
    <text evidence="1">Binds 1 zinc ion per subunit.</text>
</comment>
<comment type="subcellular location">
    <subcellularLocation>
        <location evidence="1">Cell inner membrane</location>
        <topology evidence="1">Multi-pass membrane protein</topology>
    </subcellularLocation>
</comment>
<comment type="similarity">
    <text evidence="1">Belongs to the peptidase M48B family.</text>
</comment>
<gene>
    <name evidence="1" type="primary">htpX</name>
    <name type="ordered locus">xcc-b100_1886</name>
</gene>
<feature type="chain" id="PRO_1000098858" description="Protease HtpX">
    <location>
        <begin position="1"/>
        <end position="292"/>
    </location>
</feature>
<feature type="transmembrane region" description="Helical" evidence="1">
    <location>
        <begin position="5"/>
        <end position="25"/>
    </location>
</feature>
<feature type="transmembrane region" description="Helical" evidence="1">
    <location>
        <begin position="34"/>
        <end position="54"/>
    </location>
</feature>
<feature type="transmembrane region" description="Helical" evidence="1">
    <location>
        <begin position="155"/>
        <end position="175"/>
    </location>
</feature>
<feature type="transmembrane region" description="Helical" evidence="1">
    <location>
        <begin position="193"/>
        <end position="213"/>
    </location>
</feature>
<feature type="active site" evidence="1">
    <location>
        <position position="141"/>
    </location>
</feature>
<feature type="binding site" evidence="1">
    <location>
        <position position="140"/>
    </location>
    <ligand>
        <name>Zn(2+)</name>
        <dbReference type="ChEBI" id="CHEBI:29105"/>
        <note>catalytic</note>
    </ligand>
</feature>
<feature type="binding site" evidence="1">
    <location>
        <position position="144"/>
    </location>
    <ligand>
        <name>Zn(2+)</name>
        <dbReference type="ChEBI" id="CHEBI:29105"/>
        <note>catalytic</note>
    </ligand>
</feature>
<feature type="binding site" evidence="1">
    <location>
        <position position="218"/>
    </location>
    <ligand>
        <name>Zn(2+)</name>
        <dbReference type="ChEBI" id="CHEBI:29105"/>
        <note>catalytic</note>
    </ligand>
</feature>
<accession>B0RS04</accession>
<sequence>MFNRVVLFLLTNFAVLILAGIVMSVLGVNPAQMSGLLVMAAIFGFGGSFISLLLSKFMAKRSTGAQVITEPRTQTERWLVDTVRRQAQAAGIGMPEVAIYDGPEINAFATGANRNNALVAVSTGLLQHMREDEAEAVLGHEIAHIANGDMVTMALLQGVLNTFVIVLARVVGGIIDSALSGNRDSGRGFAYYIIVFVLEMVFGLFATMIAMWFSRRREFRADAGGAQLAGRNKMIAALERLSLNHGQNTLPSQVQAFGISGGVGEGLRRLFLSHPPLTERIAALRASNGTAM</sequence>
<dbReference type="EC" id="3.4.24.-" evidence="1"/>
<dbReference type="EMBL" id="AM920689">
    <property type="protein sequence ID" value="CAP51239.1"/>
    <property type="molecule type" value="Genomic_DNA"/>
</dbReference>
<dbReference type="SMR" id="B0RS04"/>
<dbReference type="MEROPS" id="M48.002"/>
<dbReference type="KEGG" id="xca:xcc-b100_1886"/>
<dbReference type="HOGENOM" id="CLU_042266_1_0_6"/>
<dbReference type="Proteomes" id="UP000001188">
    <property type="component" value="Chromosome"/>
</dbReference>
<dbReference type="GO" id="GO:0005886">
    <property type="term" value="C:plasma membrane"/>
    <property type="evidence" value="ECO:0007669"/>
    <property type="project" value="UniProtKB-SubCell"/>
</dbReference>
<dbReference type="GO" id="GO:0004222">
    <property type="term" value="F:metalloendopeptidase activity"/>
    <property type="evidence" value="ECO:0007669"/>
    <property type="project" value="UniProtKB-UniRule"/>
</dbReference>
<dbReference type="GO" id="GO:0008270">
    <property type="term" value="F:zinc ion binding"/>
    <property type="evidence" value="ECO:0007669"/>
    <property type="project" value="UniProtKB-UniRule"/>
</dbReference>
<dbReference type="GO" id="GO:0006508">
    <property type="term" value="P:proteolysis"/>
    <property type="evidence" value="ECO:0007669"/>
    <property type="project" value="UniProtKB-KW"/>
</dbReference>
<dbReference type="CDD" id="cd07335">
    <property type="entry name" value="M48B_HtpX_like"/>
    <property type="match status" value="1"/>
</dbReference>
<dbReference type="Gene3D" id="3.30.2010.10">
    <property type="entry name" value="Metalloproteases ('zincins'), catalytic domain"/>
    <property type="match status" value="1"/>
</dbReference>
<dbReference type="HAMAP" id="MF_00188">
    <property type="entry name" value="Pept_M48_protease_HtpX"/>
    <property type="match status" value="1"/>
</dbReference>
<dbReference type="InterPro" id="IPR050083">
    <property type="entry name" value="HtpX_protease"/>
</dbReference>
<dbReference type="InterPro" id="IPR022919">
    <property type="entry name" value="Pept_M48_protease_HtpX"/>
</dbReference>
<dbReference type="InterPro" id="IPR001915">
    <property type="entry name" value="Peptidase_M48"/>
</dbReference>
<dbReference type="NCBIfam" id="NF003965">
    <property type="entry name" value="PRK05457.1"/>
    <property type="match status" value="1"/>
</dbReference>
<dbReference type="PANTHER" id="PTHR43221">
    <property type="entry name" value="PROTEASE HTPX"/>
    <property type="match status" value="1"/>
</dbReference>
<dbReference type="PANTHER" id="PTHR43221:SF1">
    <property type="entry name" value="PROTEASE HTPX"/>
    <property type="match status" value="1"/>
</dbReference>
<dbReference type="Pfam" id="PF01435">
    <property type="entry name" value="Peptidase_M48"/>
    <property type="match status" value="1"/>
</dbReference>
<evidence type="ECO:0000255" key="1">
    <source>
        <dbReference type="HAMAP-Rule" id="MF_00188"/>
    </source>
</evidence>
<proteinExistence type="inferred from homology"/>
<keyword id="KW-0997">Cell inner membrane</keyword>
<keyword id="KW-1003">Cell membrane</keyword>
<keyword id="KW-0378">Hydrolase</keyword>
<keyword id="KW-0472">Membrane</keyword>
<keyword id="KW-0479">Metal-binding</keyword>
<keyword id="KW-0482">Metalloprotease</keyword>
<keyword id="KW-0645">Protease</keyword>
<keyword id="KW-0346">Stress response</keyword>
<keyword id="KW-0812">Transmembrane</keyword>
<keyword id="KW-1133">Transmembrane helix</keyword>
<keyword id="KW-0862">Zinc</keyword>